<reference key="1">
    <citation type="submission" date="2006-08" db="EMBL/GenBank/DDBJ databases">
        <title>Complete sequence of Shewanella frigidimarina NCIMB 400.</title>
        <authorList>
            <consortium name="US DOE Joint Genome Institute"/>
            <person name="Copeland A."/>
            <person name="Lucas S."/>
            <person name="Lapidus A."/>
            <person name="Barry K."/>
            <person name="Detter J.C."/>
            <person name="Glavina del Rio T."/>
            <person name="Hammon N."/>
            <person name="Israni S."/>
            <person name="Dalin E."/>
            <person name="Tice H."/>
            <person name="Pitluck S."/>
            <person name="Fredrickson J.K."/>
            <person name="Kolker E."/>
            <person name="McCuel L.A."/>
            <person name="DiChristina T."/>
            <person name="Nealson K.H."/>
            <person name="Newman D."/>
            <person name="Tiedje J.M."/>
            <person name="Zhou J."/>
            <person name="Romine M.F."/>
            <person name="Culley D.E."/>
            <person name="Serres M."/>
            <person name="Chertkov O."/>
            <person name="Brettin T."/>
            <person name="Bruce D."/>
            <person name="Han C."/>
            <person name="Tapia R."/>
            <person name="Gilna P."/>
            <person name="Schmutz J."/>
            <person name="Larimer F."/>
            <person name="Land M."/>
            <person name="Hauser L."/>
            <person name="Kyrpides N."/>
            <person name="Mikhailova N."/>
            <person name="Richardson P."/>
        </authorList>
    </citation>
    <scope>NUCLEOTIDE SEQUENCE [LARGE SCALE GENOMIC DNA]</scope>
    <source>
        <strain>NCIMB 400</strain>
    </source>
</reference>
<name>SELO_SHEFN</name>
<accession>Q088P6</accession>
<comment type="function">
    <text evidence="1">Nucleotidyltransferase involved in the post-translational modification of proteins. It can catalyze the addition of adenosine monophosphate (AMP) or uridine monophosphate (UMP) to a protein, resulting in modifications known as AMPylation and UMPylation.</text>
</comment>
<comment type="catalytic activity">
    <reaction evidence="1">
        <text>L-seryl-[protein] + ATP = 3-O-(5'-adenylyl)-L-seryl-[protein] + diphosphate</text>
        <dbReference type="Rhea" id="RHEA:58120"/>
        <dbReference type="Rhea" id="RHEA-COMP:9863"/>
        <dbReference type="Rhea" id="RHEA-COMP:15073"/>
        <dbReference type="ChEBI" id="CHEBI:29999"/>
        <dbReference type="ChEBI" id="CHEBI:30616"/>
        <dbReference type="ChEBI" id="CHEBI:33019"/>
        <dbReference type="ChEBI" id="CHEBI:142516"/>
        <dbReference type="EC" id="2.7.7.108"/>
    </reaction>
</comment>
<comment type="catalytic activity">
    <reaction evidence="1">
        <text>L-threonyl-[protein] + ATP = 3-O-(5'-adenylyl)-L-threonyl-[protein] + diphosphate</text>
        <dbReference type="Rhea" id="RHEA:54292"/>
        <dbReference type="Rhea" id="RHEA-COMP:11060"/>
        <dbReference type="Rhea" id="RHEA-COMP:13847"/>
        <dbReference type="ChEBI" id="CHEBI:30013"/>
        <dbReference type="ChEBI" id="CHEBI:30616"/>
        <dbReference type="ChEBI" id="CHEBI:33019"/>
        <dbReference type="ChEBI" id="CHEBI:138113"/>
        <dbReference type="EC" id="2.7.7.108"/>
    </reaction>
</comment>
<comment type="catalytic activity">
    <reaction evidence="1">
        <text>L-tyrosyl-[protein] + ATP = O-(5'-adenylyl)-L-tyrosyl-[protein] + diphosphate</text>
        <dbReference type="Rhea" id="RHEA:54288"/>
        <dbReference type="Rhea" id="RHEA-COMP:10136"/>
        <dbReference type="Rhea" id="RHEA-COMP:13846"/>
        <dbReference type="ChEBI" id="CHEBI:30616"/>
        <dbReference type="ChEBI" id="CHEBI:33019"/>
        <dbReference type="ChEBI" id="CHEBI:46858"/>
        <dbReference type="ChEBI" id="CHEBI:83624"/>
        <dbReference type="EC" id="2.7.7.108"/>
    </reaction>
</comment>
<comment type="catalytic activity">
    <reaction evidence="1">
        <text>L-histidyl-[protein] + UTP = N(tele)-(5'-uridylyl)-L-histidyl-[protein] + diphosphate</text>
        <dbReference type="Rhea" id="RHEA:83891"/>
        <dbReference type="Rhea" id="RHEA-COMP:9745"/>
        <dbReference type="Rhea" id="RHEA-COMP:20239"/>
        <dbReference type="ChEBI" id="CHEBI:29979"/>
        <dbReference type="ChEBI" id="CHEBI:33019"/>
        <dbReference type="ChEBI" id="CHEBI:46398"/>
        <dbReference type="ChEBI" id="CHEBI:233474"/>
    </reaction>
</comment>
<comment type="catalytic activity">
    <reaction evidence="1">
        <text>L-seryl-[protein] + UTP = O-(5'-uridylyl)-L-seryl-[protein] + diphosphate</text>
        <dbReference type="Rhea" id="RHEA:64604"/>
        <dbReference type="Rhea" id="RHEA-COMP:9863"/>
        <dbReference type="Rhea" id="RHEA-COMP:16635"/>
        <dbReference type="ChEBI" id="CHEBI:29999"/>
        <dbReference type="ChEBI" id="CHEBI:33019"/>
        <dbReference type="ChEBI" id="CHEBI:46398"/>
        <dbReference type="ChEBI" id="CHEBI:156051"/>
    </reaction>
</comment>
<comment type="catalytic activity">
    <reaction evidence="1">
        <text>L-tyrosyl-[protein] + UTP = O-(5'-uridylyl)-L-tyrosyl-[protein] + diphosphate</text>
        <dbReference type="Rhea" id="RHEA:83887"/>
        <dbReference type="Rhea" id="RHEA-COMP:10136"/>
        <dbReference type="Rhea" id="RHEA-COMP:20238"/>
        <dbReference type="ChEBI" id="CHEBI:33019"/>
        <dbReference type="ChEBI" id="CHEBI:46398"/>
        <dbReference type="ChEBI" id="CHEBI:46858"/>
        <dbReference type="ChEBI" id="CHEBI:90602"/>
    </reaction>
</comment>
<comment type="cofactor">
    <cofactor evidence="1">
        <name>Mg(2+)</name>
        <dbReference type="ChEBI" id="CHEBI:18420"/>
    </cofactor>
    <cofactor evidence="1">
        <name>Mn(2+)</name>
        <dbReference type="ChEBI" id="CHEBI:29035"/>
    </cofactor>
</comment>
<comment type="similarity">
    <text evidence="1">Belongs to the SELO family.</text>
</comment>
<proteinExistence type="inferred from homology"/>
<feature type="chain" id="PRO_0000271866" description="Protein nucleotidyltransferase YdiU">
    <location>
        <begin position="1"/>
        <end position="493"/>
    </location>
</feature>
<feature type="active site" description="Proton acceptor" evidence="1">
    <location>
        <position position="244"/>
    </location>
</feature>
<feature type="binding site" evidence="1">
    <location>
        <position position="81"/>
    </location>
    <ligand>
        <name>ATP</name>
        <dbReference type="ChEBI" id="CHEBI:30616"/>
    </ligand>
</feature>
<feature type="binding site" evidence="1">
    <location>
        <position position="83"/>
    </location>
    <ligand>
        <name>ATP</name>
        <dbReference type="ChEBI" id="CHEBI:30616"/>
    </ligand>
</feature>
<feature type="binding site" evidence="1">
    <location>
        <position position="84"/>
    </location>
    <ligand>
        <name>ATP</name>
        <dbReference type="ChEBI" id="CHEBI:30616"/>
    </ligand>
</feature>
<feature type="binding site" evidence="1">
    <location>
        <position position="103"/>
    </location>
    <ligand>
        <name>ATP</name>
        <dbReference type="ChEBI" id="CHEBI:30616"/>
    </ligand>
</feature>
<feature type="binding site" evidence="1">
    <location>
        <position position="115"/>
    </location>
    <ligand>
        <name>ATP</name>
        <dbReference type="ChEBI" id="CHEBI:30616"/>
    </ligand>
</feature>
<feature type="binding site" evidence="1">
    <location>
        <position position="116"/>
    </location>
    <ligand>
        <name>ATP</name>
        <dbReference type="ChEBI" id="CHEBI:30616"/>
    </ligand>
</feature>
<feature type="binding site" evidence="1">
    <location>
        <position position="166"/>
    </location>
    <ligand>
        <name>ATP</name>
        <dbReference type="ChEBI" id="CHEBI:30616"/>
    </ligand>
</feature>
<feature type="binding site" evidence="1">
    <location>
        <position position="173"/>
    </location>
    <ligand>
        <name>ATP</name>
        <dbReference type="ChEBI" id="CHEBI:30616"/>
    </ligand>
</feature>
<feature type="binding site" evidence="1">
    <location>
        <position position="245"/>
    </location>
    <ligand>
        <name>Mg(2+)</name>
        <dbReference type="ChEBI" id="CHEBI:18420"/>
    </ligand>
</feature>
<feature type="binding site" evidence="1">
    <location>
        <position position="254"/>
    </location>
    <ligand>
        <name>ATP</name>
        <dbReference type="ChEBI" id="CHEBI:30616"/>
    </ligand>
</feature>
<feature type="binding site" evidence="1">
    <location>
        <position position="254"/>
    </location>
    <ligand>
        <name>Mg(2+)</name>
        <dbReference type="ChEBI" id="CHEBI:18420"/>
    </ligand>
</feature>
<evidence type="ECO:0000255" key="1">
    <source>
        <dbReference type="HAMAP-Rule" id="MF_00692"/>
    </source>
</evidence>
<gene>
    <name evidence="1" type="primary">ydiU</name>
    <name evidence="1" type="synonym">selO</name>
    <name type="ordered locus">Sfri_0407</name>
</gene>
<sequence length="493" mass="55066">MQFKQDFFEQLEGFYSQVYPLPISNPHWLGWSDDAAQLIGLEKPNAELLMQLSANYAAPGASYYAQVYSGHQFGGYTPRLGDGRSIILGEAIGPNGAWDVALKGGGPTPYSRQGDGRAVMRSAVREFLVSEALAALNVPTSRALAVIGSDLPVWRESQETAAITVRLAKSHIRFGHFEYFFHSEQGDAAKLTQLVNFTIQQHFPHLSTDAAGYKQWFYEVVQSTAKMIAHWQSVGFAHGVMNTDNMSILGDTFDFGPFAFLDTFKEGFICNHSDHEGRYAFGQQPGIGLWNLKRLAQTLTPIIESDDLIAALNTYQFELVQQYLLLMRAKLGFSQPNQSPNAINAEEQADLGNKDLQLVGQLTGLLETNQLDYTNSLRRFGQLDPSSAHSSLRDDMVDLAGFDTWYQAYQSRVGEVADVNAWQCERNSANPKYILRNYLAQEAIIAIEENGDNSKLLQLQQLLQRPFDEQSEMEDFAKRPPQWGQGLIMSCSS</sequence>
<keyword id="KW-0067">ATP-binding</keyword>
<keyword id="KW-0460">Magnesium</keyword>
<keyword id="KW-0464">Manganese</keyword>
<keyword id="KW-0479">Metal-binding</keyword>
<keyword id="KW-0547">Nucleotide-binding</keyword>
<keyword id="KW-0548">Nucleotidyltransferase</keyword>
<keyword id="KW-1185">Reference proteome</keyword>
<keyword id="KW-0808">Transferase</keyword>
<dbReference type="EC" id="2.7.7.-" evidence="1"/>
<dbReference type="EC" id="2.7.7.108" evidence="1"/>
<dbReference type="EMBL" id="CP000447">
    <property type="protein sequence ID" value="ABI70269.1"/>
    <property type="molecule type" value="Genomic_DNA"/>
</dbReference>
<dbReference type="RefSeq" id="WP_011635896.1">
    <property type="nucleotide sequence ID" value="NC_008345.1"/>
</dbReference>
<dbReference type="SMR" id="Q088P6"/>
<dbReference type="STRING" id="318167.Sfri_0407"/>
<dbReference type="KEGG" id="sfr:Sfri_0407"/>
<dbReference type="eggNOG" id="COG0397">
    <property type="taxonomic scope" value="Bacteria"/>
</dbReference>
<dbReference type="HOGENOM" id="CLU_010245_4_0_6"/>
<dbReference type="OrthoDB" id="9776281at2"/>
<dbReference type="Proteomes" id="UP000000684">
    <property type="component" value="Chromosome"/>
</dbReference>
<dbReference type="GO" id="GO:0070733">
    <property type="term" value="F:AMPylase activity"/>
    <property type="evidence" value="ECO:0007669"/>
    <property type="project" value="RHEA"/>
</dbReference>
<dbReference type="GO" id="GO:0005524">
    <property type="term" value="F:ATP binding"/>
    <property type="evidence" value="ECO:0007669"/>
    <property type="project" value="UniProtKB-UniRule"/>
</dbReference>
<dbReference type="GO" id="GO:0000287">
    <property type="term" value="F:magnesium ion binding"/>
    <property type="evidence" value="ECO:0007669"/>
    <property type="project" value="UniProtKB-UniRule"/>
</dbReference>
<dbReference type="HAMAP" id="MF_00692">
    <property type="entry name" value="YdiU_SelO"/>
    <property type="match status" value="1"/>
</dbReference>
<dbReference type="InterPro" id="IPR003846">
    <property type="entry name" value="SelO"/>
</dbReference>
<dbReference type="NCBIfam" id="NF000658">
    <property type="entry name" value="PRK00029.1"/>
    <property type="match status" value="1"/>
</dbReference>
<dbReference type="PANTHER" id="PTHR32057">
    <property type="entry name" value="PROTEIN ADENYLYLTRANSFERASE SELO, MITOCHONDRIAL"/>
    <property type="match status" value="1"/>
</dbReference>
<dbReference type="PANTHER" id="PTHR32057:SF14">
    <property type="entry name" value="PROTEIN ADENYLYLTRANSFERASE SELO, MITOCHONDRIAL"/>
    <property type="match status" value="1"/>
</dbReference>
<dbReference type="Pfam" id="PF02696">
    <property type="entry name" value="SelO"/>
    <property type="match status" value="1"/>
</dbReference>
<protein>
    <recommendedName>
        <fullName evidence="1">Protein nucleotidyltransferase YdiU</fullName>
        <ecNumber evidence="1">2.7.7.-</ecNumber>
    </recommendedName>
    <alternativeName>
        <fullName evidence="1">Protein adenylyltransferase YdiU</fullName>
        <ecNumber evidence="1">2.7.7.108</ecNumber>
    </alternativeName>
    <alternativeName>
        <fullName evidence="1">Protein uridylyltransferase YdiU</fullName>
        <ecNumber evidence="1">2.7.7.-</ecNumber>
    </alternativeName>
</protein>
<organism>
    <name type="scientific">Shewanella frigidimarina (strain NCIMB 400)</name>
    <dbReference type="NCBI Taxonomy" id="318167"/>
    <lineage>
        <taxon>Bacteria</taxon>
        <taxon>Pseudomonadati</taxon>
        <taxon>Pseudomonadota</taxon>
        <taxon>Gammaproteobacteria</taxon>
        <taxon>Alteromonadales</taxon>
        <taxon>Shewanellaceae</taxon>
        <taxon>Shewanella</taxon>
    </lineage>
</organism>